<sequence>MDVRPKENFSQRQDTSAVRHRKTCKVNERAEIPSQPHNGTINGVNKRITKREGGEHISSPSRDAHVPVFILALVIVLSVSTRFYKITEPPHVCWDETHFGKMGSYYINRTFFFDVHPPLGKMLIGLAGYLTGYDGTFPFIKPGDKYEHHNYWGMRAFCAALGSCLPPFAFLVVLELSQSSTAALIAASLLIFDTGCITLSQYILLDPILMFFIMGSVLCMVKFNTQRLGPFSFSWWFWLLLTGLCLSGSLGVKFVGLFVILLVGINTALDLWRLLGDLSLSLVDFGKHLLARVFGLIMLPLFLYTTIFAIHFIVLNRSGPGDGFFSSAFQSRLIGNNLHNASMPEYLAYGSVITVKNLRIAGGYLHSHWHLYPEGVGAHQQQVTAYLHKDYNNLWLVKRLDNSDDLTGSPELVRHGDIIRLEHKETTRNLHSHFHEAPLTKKHLQVTGYGINGSGDVNDLWQVEVCGGRKGDPVKVLRSKVRFLHRATGCVLCSSGKTLPKWGWEQVEVTCSPYVKETPNSQWNIEDHINPKLPNISLAVLKPTFLEILWESHIVMIRGNSGLKPKDNEMNSKPWHWPINYQGLRFSGVNETEYRVYLLGNPVIWWLNLLSLALFVILLTVASLAVQRRVKMEGMMKVHCHTLMEGGGMLFLGWLLHYLPFYIMGRILYYHHYFPAMMFSSMLTGITLDILLQNLQLLFSSSLSHYLMRGGQSVLLLGFIYSFYLFHPLSYGMRGPLAHDSASSMAGLRWMESWEF</sequence>
<organism evidence="11">
    <name type="scientific">Danio rerio</name>
    <name type="common">Zebrafish</name>
    <name type="synonym">Brachydanio rerio</name>
    <dbReference type="NCBI Taxonomy" id="7955"/>
    <lineage>
        <taxon>Eukaryota</taxon>
        <taxon>Metazoa</taxon>
        <taxon>Chordata</taxon>
        <taxon>Craniata</taxon>
        <taxon>Vertebrata</taxon>
        <taxon>Euteleostomi</taxon>
        <taxon>Actinopterygii</taxon>
        <taxon>Neopterygii</taxon>
        <taxon>Teleostei</taxon>
        <taxon>Ostariophysi</taxon>
        <taxon>Cypriniformes</taxon>
        <taxon>Danionidae</taxon>
        <taxon>Danioninae</taxon>
        <taxon>Danio</taxon>
    </lineage>
</organism>
<evidence type="ECO:0000250" key="1">
    <source>
        <dbReference type="UniProtKB" id="Q9Y6A1"/>
    </source>
</evidence>
<evidence type="ECO:0000255" key="2"/>
<evidence type="ECO:0000255" key="3">
    <source>
        <dbReference type="PROSITE-ProRule" id="PRU00131"/>
    </source>
</evidence>
<evidence type="ECO:0000269" key="4">
    <source>
    </source>
</evidence>
<evidence type="ECO:0000269" key="5">
    <source>
    </source>
</evidence>
<evidence type="ECO:0000303" key="6">
    <source>
    </source>
</evidence>
<evidence type="ECO:0000305" key="7"/>
<evidence type="ECO:0000312" key="8">
    <source>
        <dbReference type="EMBL" id="AAI29429.1"/>
    </source>
</evidence>
<evidence type="ECO:0000312" key="9">
    <source>
        <dbReference type="EMBL" id="ABH03467.1"/>
    </source>
</evidence>
<evidence type="ECO:0000312" key="10">
    <source>
        <dbReference type="EMBL" id="BAJ15896.1"/>
    </source>
</evidence>
<evidence type="ECO:0000312" key="11">
    <source>
        <dbReference type="Proteomes" id="UP000000437"/>
    </source>
</evidence>
<feature type="chain" id="PRO_0000442138" description="Protein O-mannosyl-transferase 2">
    <location>
        <begin position="1"/>
        <end position="756"/>
    </location>
</feature>
<feature type="transmembrane region" description="Helical" evidence="2">
    <location>
        <begin position="64"/>
        <end position="84"/>
    </location>
</feature>
<feature type="transmembrane region" description="Helical" evidence="2">
    <location>
        <begin position="110"/>
        <end position="130"/>
    </location>
</feature>
<feature type="transmembrane region" description="Helical" evidence="2">
    <location>
        <begin position="156"/>
        <end position="176"/>
    </location>
</feature>
<feature type="transmembrane region" description="Helical" evidence="2">
    <location>
        <begin position="179"/>
        <end position="199"/>
    </location>
</feature>
<feature type="transmembrane region" description="Helical" evidence="2">
    <location>
        <begin position="203"/>
        <end position="223"/>
    </location>
</feature>
<feature type="transmembrane region" description="Helical" evidence="2">
    <location>
        <begin position="245"/>
        <end position="265"/>
    </location>
</feature>
<feature type="transmembrane region" description="Helical" evidence="2">
    <location>
        <begin position="293"/>
        <end position="313"/>
    </location>
</feature>
<feature type="transmembrane region" description="Helical" evidence="2">
    <location>
        <begin position="602"/>
        <end position="622"/>
    </location>
</feature>
<feature type="transmembrane region" description="Helical" evidence="2">
    <location>
        <begin position="643"/>
        <end position="663"/>
    </location>
</feature>
<feature type="transmembrane region" description="Helical" evidence="2">
    <location>
        <begin position="672"/>
        <end position="692"/>
    </location>
</feature>
<feature type="transmembrane region" description="Helical" evidence="2">
    <location>
        <begin position="713"/>
        <end position="733"/>
    </location>
</feature>
<feature type="domain" description="MIR 1" evidence="3">
    <location>
        <begin position="344"/>
        <end position="400"/>
    </location>
</feature>
<feature type="domain" description="MIR 2" evidence="3">
    <location>
        <begin position="410"/>
        <end position="466"/>
    </location>
</feature>
<feature type="domain" description="MIR 3" evidence="3">
    <location>
        <begin position="471"/>
        <end position="528"/>
    </location>
</feature>
<feature type="sequence conflict" description="In Ref. 4; AAI29429/AAI64586 and 2; BAJ15896." evidence="7" ref="4 2">
    <original>P</original>
    <variation>H</variation>
    <location>
        <position position="33"/>
    </location>
</feature>
<feature type="sequence conflict" description="In Ref. 2; BAJ15896 and 4; AAI29429/AAI64586." evidence="7" ref="2 4">
    <original>V</original>
    <variation>A</variation>
    <location>
        <position position="44"/>
    </location>
</feature>
<feature type="sequence conflict" description="In Ref. 2; BAJ15896." evidence="7" ref="2">
    <original>R</original>
    <variation>M</variation>
    <location>
        <position position="47"/>
    </location>
</feature>
<feature type="sequence conflict" description="In Ref. 2; BAJ15896 and 4; AAI29429/AAI64586." evidence="7" ref="2 4">
    <original>E</original>
    <variation>G</variation>
    <location>
        <position position="52"/>
    </location>
</feature>
<feature type="sequence conflict" description="In Ref. 1; ABH03467." evidence="7" ref="1">
    <original>H</original>
    <variation>R</variation>
    <location>
        <position position="56"/>
    </location>
</feature>
<feature type="sequence conflict" description="In Ref. 4; AAI29429/AAI64586." evidence="7" ref="4">
    <original>S</original>
    <variation>P</variation>
    <location>
        <position position="180"/>
    </location>
</feature>
<feature type="sequence conflict" description="In Ref. 1; ABH03467." evidence="7" ref="1">
    <original>L</original>
    <variation>P</variation>
    <location>
        <position position="338"/>
    </location>
</feature>
<feature type="sequence conflict" description="In Ref. 4; AAI29429/AAI64586." evidence="7" ref="4">
    <original>Y</original>
    <variation>F</variation>
    <location>
        <position position="391"/>
    </location>
</feature>
<feature type="sequence conflict" description="In Ref. 2; BAJ15896." evidence="7" ref="2">
    <original>W</original>
    <variation>R</variation>
    <location>
        <position position="461"/>
    </location>
</feature>
<feature type="sequence conflict" description="In Ref. 1; ABH03467." evidence="7" ref="1">
    <original>N</original>
    <variation>S</variation>
    <location>
        <position position="571"/>
    </location>
</feature>
<keyword id="KW-0256">Endoplasmic reticulum</keyword>
<keyword id="KW-0328">Glycosyltransferase</keyword>
<keyword id="KW-0472">Membrane</keyword>
<keyword id="KW-1185">Reference proteome</keyword>
<keyword id="KW-0677">Repeat</keyword>
<keyword id="KW-0808">Transferase</keyword>
<keyword id="KW-0812">Transmembrane</keyword>
<keyword id="KW-1133">Transmembrane helix</keyword>
<reference evidence="9" key="1">
    <citation type="journal article" date="2008" name="Genomics">
        <title>Genes required for functional glycosylation of dystroglycan are conserved in zebrafish.</title>
        <authorList>
            <person name="Moore C.J."/>
            <person name="Goh H.T."/>
            <person name="Hewitt J.E."/>
        </authorList>
    </citation>
    <scope>NUCLEOTIDE SEQUENCE [MRNA]</scope>
    <scope>DEVELOPMENTAL STAGE</scope>
</reference>
<reference evidence="10" key="2">
    <citation type="journal article" date="2010" name="Glycobiology">
        <title>Protein O-mannosylation is necessary for normal embryonic development in zebrafish.</title>
        <authorList>
            <person name="Avsar-Ban E."/>
            <person name="Ishikawa H."/>
            <person name="Manya H."/>
            <person name="Watanabe M."/>
            <person name="Akiyama S."/>
            <person name="Miyake H."/>
            <person name="Endo T."/>
            <person name="Tamaru Y."/>
        </authorList>
    </citation>
    <scope>NUCLEOTIDE SEQUENCE [MRNA]</scope>
    <scope>FUNCTION</scope>
    <scope>CATALYTIC ACTIVITY</scope>
    <scope>PATHWAY</scope>
    <scope>TISSUE SPECIFICITY</scope>
    <scope>DEVELOPMENTAL STAGE</scope>
    <scope>DISRUPTION PHENOTYPE</scope>
</reference>
<reference evidence="11" key="3">
    <citation type="journal article" date="2013" name="Nature">
        <title>The zebrafish reference genome sequence and its relationship to the human genome.</title>
        <authorList>
            <person name="Howe K."/>
            <person name="Clark M.D."/>
            <person name="Torroja C.F."/>
            <person name="Torrance J."/>
            <person name="Berthelot C."/>
            <person name="Muffato M."/>
            <person name="Collins J.E."/>
            <person name="Humphray S."/>
            <person name="McLaren K."/>
            <person name="Matthews L."/>
            <person name="McLaren S."/>
            <person name="Sealy I."/>
            <person name="Caccamo M."/>
            <person name="Churcher C."/>
            <person name="Scott C."/>
            <person name="Barrett J.C."/>
            <person name="Koch R."/>
            <person name="Rauch G.J."/>
            <person name="White S."/>
            <person name="Chow W."/>
            <person name="Kilian B."/>
            <person name="Quintais L.T."/>
            <person name="Guerra-Assuncao J.A."/>
            <person name="Zhou Y."/>
            <person name="Gu Y."/>
            <person name="Yen J."/>
            <person name="Vogel J.H."/>
            <person name="Eyre T."/>
            <person name="Redmond S."/>
            <person name="Banerjee R."/>
            <person name="Chi J."/>
            <person name="Fu B."/>
            <person name="Langley E."/>
            <person name="Maguire S.F."/>
            <person name="Laird G.K."/>
            <person name="Lloyd D."/>
            <person name="Kenyon E."/>
            <person name="Donaldson S."/>
            <person name="Sehra H."/>
            <person name="Almeida-King J."/>
            <person name="Loveland J."/>
            <person name="Trevanion S."/>
            <person name="Jones M."/>
            <person name="Quail M."/>
            <person name="Willey D."/>
            <person name="Hunt A."/>
            <person name="Burton J."/>
            <person name="Sims S."/>
            <person name="McLay K."/>
            <person name="Plumb B."/>
            <person name="Davis J."/>
            <person name="Clee C."/>
            <person name="Oliver K."/>
            <person name="Clark R."/>
            <person name="Riddle C."/>
            <person name="Elliot D."/>
            <person name="Threadgold G."/>
            <person name="Harden G."/>
            <person name="Ware D."/>
            <person name="Begum S."/>
            <person name="Mortimore B."/>
            <person name="Kerry G."/>
            <person name="Heath P."/>
            <person name="Phillimore B."/>
            <person name="Tracey A."/>
            <person name="Corby N."/>
            <person name="Dunn M."/>
            <person name="Johnson C."/>
            <person name="Wood J."/>
            <person name="Clark S."/>
            <person name="Pelan S."/>
            <person name="Griffiths G."/>
            <person name="Smith M."/>
            <person name="Glithero R."/>
            <person name="Howden P."/>
            <person name="Barker N."/>
            <person name="Lloyd C."/>
            <person name="Stevens C."/>
            <person name="Harley J."/>
            <person name="Holt K."/>
            <person name="Panagiotidis G."/>
            <person name="Lovell J."/>
            <person name="Beasley H."/>
            <person name="Henderson C."/>
            <person name="Gordon D."/>
            <person name="Auger K."/>
            <person name="Wright D."/>
            <person name="Collins J."/>
            <person name="Raisen C."/>
            <person name="Dyer L."/>
            <person name="Leung K."/>
            <person name="Robertson L."/>
            <person name="Ambridge K."/>
            <person name="Leongamornlert D."/>
            <person name="McGuire S."/>
            <person name="Gilderthorp R."/>
            <person name="Griffiths C."/>
            <person name="Manthravadi D."/>
            <person name="Nichol S."/>
            <person name="Barker G."/>
            <person name="Whitehead S."/>
            <person name="Kay M."/>
            <person name="Brown J."/>
            <person name="Murnane C."/>
            <person name="Gray E."/>
            <person name="Humphries M."/>
            <person name="Sycamore N."/>
            <person name="Barker D."/>
            <person name="Saunders D."/>
            <person name="Wallis J."/>
            <person name="Babbage A."/>
            <person name="Hammond S."/>
            <person name="Mashreghi-Mohammadi M."/>
            <person name="Barr L."/>
            <person name="Martin S."/>
            <person name="Wray P."/>
            <person name="Ellington A."/>
            <person name="Matthews N."/>
            <person name="Ellwood M."/>
            <person name="Woodmansey R."/>
            <person name="Clark G."/>
            <person name="Cooper J."/>
            <person name="Tromans A."/>
            <person name="Grafham D."/>
            <person name="Skuce C."/>
            <person name="Pandian R."/>
            <person name="Andrews R."/>
            <person name="Harrison E."/>
            <person name="Kimberley A."/>
            <person name="Garnett J."/>
            <person name="Fosker N."/>
            <person name="Hall R."/>
            <person name="Garner P."/>
            <person name="Kelly D."/>
            <person name="Bird C."/>
            <person name="Palmer S."/>
            <person name="Gehring I."/>
            <person name="Berger A."/>
            <person name="Dooley C.M."/>
            <person name="Ersan-Urun Z."/>
            <person name="Eser C."/>
            <person name="Geiger H."/>
            <person name="Geisler M."/>
            <person name="Karotki L."/>
            <person name="Kirn A."/>
            <person name="Konantz J."/>
            <person name="Konantz M."/>
            <person name="Oberlander M."/>
            <person name="Rudolph-Geiger S."/>
            <person name="Teucke M."/>
            <person name="Lanz C."/>
            <person name="Raddatz G."/>
            <person name="Osoegawa K."/>
            <person name="Zhu B."/>
            <person name="Rapp A."/>
            <person name="Widaa S."/>
            <person name="Langford C."/>
            <person name="Yang F."/>
            <person name="Schuster S.C."/>
            <person name="Carter N.P."/>
            <person name="Harrow J."/>
            <person name="Ning Z."/>
            <person name="Herrero J."/>
            <person name="Searle S.M."/>
            <person name="Enright A."/>
            <person name="Geisler R."/>
            <person name="Plasterk R.H."/>
            <person name="Lee C."/>
            <person name="Westerfield M."/>
            <person name="de Jong P.J."/>
            <person name="Zon L.I."/>
            <person name="Postlethwait J.H."/>
            <person name="Nusslein-Volhard C."/>
            <person name="Hubbard T.J."/>
            <person name="Roest Crollius H."/>
            <person name="Rogers J."/>
            <person name="Stemple D.L."/>
        </authorList>
    </citation>
    <scope>NUCLEOTIDE SEQUENCE [LARGE SCALE GENOMIC DNA]</scope>
    <source>
        <strain evidence="11">Tuebingen</strain>
    </source>
</reference>
<reference evidence="8" key="4">
    <citation type="submission" date="2008-04" db="EMBL/GenBank/DDBJ databases">
        <authorList>
            <consortium name="NIH - Zebrafish Gene Collection (ZGC) project"/>
        </authorList>
    </citation>
    <scope>NUCLEOTIDE SEQUENCE [LARGE SCALE MRNA]</scope>
    <source>
        <tissue evidence="8">Embryo</tissue>
    </source>
</reference>
<accession>F1Q8R9</accession>
<accession>A1L2B0</accession>
<accession>E0CZK0</accession>
<accession>Q0PIP2</accession>
<protein>
    <recommendedName>
        <fullName evidence="6">Protein O-mannosyl-transferase 2</fullName>
        <ecNumber evidence="5">2.4.1.109</ecNumber>
    </recommendedName>
</protein>
<comment type="function">
    <text evidence="5">Transfers mannosyl residues to the hydroxyl group of serine or threonine residues. Coexpression of both POMT1 and POMT2 is necessary for enzyme activity, expression of either POMT1 or POMT2 alone is insufficient.</text>
</comment>
<comment type="catalytic activity">
    <reaction evidence="5">
        <text>a di-trans,poly-cis-dolichyl beta-D-mannosyl phosphate + L-seryl-[protein] = 3-O-(alpha-D-mannosyl)-L-seryl-[protein] + a di-trans,poly-cis-dolichyl phosphate + H(+)</text>
        <dbReference type="Rhea" id="RHEA:17377"/>
        <dbReference type="Rhea" id="RHEA-COMP:9863"/>
        <dbReference type="Rhea" id="RHEA-COMP:13546"/>
        <dbReference type="Rhea" id="RHEA-COMP:19498"/>
        <dbReference type="Rhea" id="RHEA-COMP:19501"/>
        <dbReference type="ChEBI" id="CHEBI:15378"/>
        <dbReference type="ChEBI" id="CHEBI:29999"/>
        <dbReference type="ChEBI" id="CHEBI:57683"/>
        <dbReference type="ChEBI" id="CHEBI:58211"/>
        <dbReference type="ChEBI" id="CHEBI:137321"/>
        <dbReference type="EC" id="2.4.1.109"/>
    </reaction>
</comment>
<comment type="catalytic activity">
    <reaction evidence="5">
        <text>a di-trans,poly-cis-dolichyl beta-D-mannosyl phosphate + L-threonyl-[protein] = 3-O-(alpha-D-mannosyl)-L-threonyl-[protein] + a di-trans,poly-cis-dolichyl phosphate + H(+)</text>
        <dbReference type="Rhea" id="RHEA:53396"/>
        <dbReference type="Rhea" id="RHEA-COMP:11060"/>
        <dbReference type="Rhea" id="RHEA-COMP:13547"/>
        <dbReference type="Rhea" id="RHEA-COMP:19498"/>
        <dbReference type="Rhea" id="RHEA-COMP:19501"/>
        <dbReference type="ChEBI" id="CHEBI:15378"/>
        <dbReference type="ChEBI" id="CHEBI:30013"/>
        <dbReference type="ChEBI" id="CHEBI:57683"/>
        <dbReference type="ChEBI" id="CHEBI:58211"/>
        <dbReference type="ChEBI" id="CHEBI:137323"/>
        <dbReference type="EC" id="2.4.1.109"/>
    </reaction>
</comment>
<comment type="pathway">
    <text evidence="5">Protein modification; protein glycosylation.</text>
</comment>
<comment type="subcellular location">
    <subcellularLocation>
        <location evidence="1">Endoplasmic reticulum membrane</location>
        <topology evidence="2">Multi-pass membrane protein</topology>
    </subcellularLocation>
</comment>
<comment type="tissue specificity">
    <text evidence="5">Widely expressed. Has particularly strong expression in ovary, testis, liver, brain, muscle, heart and eye.</text>
</comment>
<comment type="developmental stage">
    <text evidence="4 5">Detected throughout development (PubMed:18632251, PubMed:20466645). Highest expression levels are found at 0 hours post-fertilization (hpf), probably due to perdurance of maternal transcripts (PubMed:20466645). Expression levels remain high at 6 hpf and decrease rapidly by 12 hpf, followed by a second moderate peak in expression at 24 hpf (PubMed:20466645). Ubiquitously expressed during early stages of development (PubMed:18632251, PubMed:20466645). At 16-24 hpf, mainly found in eye, brain and somites (PubMed:18632251, PubMed:20466645). At 30 hpf, has strongest expression in forebrain, cerebellum and hindbrain (PubMed:18632251).</text>
</comment>
<comment type="disruption phenotype">
    <text evidence="5">Morpholino knockdown of the protein results in developmental delays at 18 hours post fertilization (hpf). At 48-72 hpf the tail is abnormally twisted, and pericardium formation and eye pigmentation are also abnormal. Swim bladders are incompletely formed. Glycosylation of alpha-dystroglycan (dag1) is severely reduced.</text>
</comment>
<comment type="similarity">
    <text evidence="7">Belongs to the glycosyltransferase 39 family.</text>
</comment>
<comment type="sequence caution" evidence="7">
    <conflict type="erroneous termination">
        <sequence resource="EMBL-CDS" id="AAI29429"/>
    </conflict>
    <text>Truncated C-terminus.</text>
</comment>
<comment type="sequence caution" evidence="7">
    <conflict type="erroneous termination">
        <sequence resource="EMBL-CDS" id="AAI64586"/>
    </conflict>
    <text>Truncated C-terminus.</text>
</comment>
<name>POMT2_DANRE</name>
<dbReference type="EC" id="2.4.1.109" evidence="5"/>
<dbReference type="EMBL" id="DQ826749">
    <property type="protein sequence ID" value="ABH03467.1"/>
    <property type="molecule type" value="mRNA"/>
</dbReference>
<dbReference type="EMBL" id="AB281276">
    <property type="protein sequence ID" value="BAJ15896.1"/>
    <property type="molecule type" value="mRNA"/>
</dbReference>
<dbReference type="EMBL" id="BX950192">
    <property type="status" value="NOT_ANNOTATED_CDS"/>
    <property type="molecule type" value="Genomic_DNA"/>
</dbReference>
<dbReference type="EMBL" id="BC129428">
    <property type="protein sequence ID" value="AAI29429.1"/>
    <property type="status" value="ALT_SEQ"/>
    <property type="molecule type" value="mRNA"/>
</dbReference>
<dbReference type="EMBL" id="BC164586">
    <property type="protein sequence ID" value="AAI64586.1"/>
    <property type="status" value="ALT_SEQ"/>
    <property type="molecule type" value="mRNA"/>
</dbReference>
<dbReference type="RefSeq" id="NP_001038498.1">
    <property type="nucleotide sequence ID" value="NM_001045033.1"/>
</dbReference>
<dbReference type="RefSeq" id="XP_005158842.1">
    <property type="nucleotide sequence ID" value="XM_005158785.5"/>
</dbReference>
<dbReference type="SMR" id="F1Q8R9"/>
<dbReference type="FunCoup" id="F1Q8R9">
    <property type="interactions" value="759"/>
</dbReference>
<dbReference type="STRING" id="7955.ENSDARP00000111637"/>
<dbReference type="CAZy" id="GT39">
    <property type="family name" value="Glycosyltransferase Family 39"/>
</dbReference>
<dbReference type="PaxDb" id="7955-ENSDARP00000111637"/>
<dbReference type="Ensembl" id="ENSDART00000077307">
    <property type="protein sequence ID" value="ENSDARP00000071774"/>
    <property type="gene ID" value="ENSDARG00000055027"/>
</dbReference>
<dbReference type="Ensembl" id="ENSDART00000126273">
    <property type="protein sequence ID" value="ENSDARP00000111637"/>
    <property type="gene ID" value="ENSDARG00000055027"/>
</dbReference>
<dbReference type="GeneID" id="563878"/>
<dbReference type="KEGG" id="dre:563878"/>
<dbReference type="AGR" id="ZFIN:ZDB-GENE-070112-1002"/>
<dbReference type="CTD" id="29954"/>
<dbReference type="ZFIN" id="ZDB-GENE-070112-1002">
    <property type="gene designation" value="pomt2"/>
</dbReference>
<dbReference type="eggNOG" id="KOG3359">
    <property type="taxonomic scope" value="Eukaryota"/>
</dbReference>
<dbReference type="HOGENOM" id="CLU_008438_5_1_1"/>
<dbReference type="InParanoid" id="F1Q8R9"/>
<dbReference type="OMA" id="MCGWDDN"/>
<dbReference type="OrthoDB" id="5561486at2759"/>
<dbReference type="PhylomeDB" id="F1Q8R9"/>
<dbReference type="TreeFam" id="TF300552"/>
<dbReference type="Reactome" id="R-DRE-5173105">
    <property type="pathway name" value="O-linked glycosylation"/>
</dbReference>
<dbReference type="UniPathway" id="UPA00378"/>
<dbReference type="PRO" id="PR:F1Q8R9"/>
<dbReference type="Proteomes" id="UP000000437">
    <property type="component" value="Chromosome 17"/>
</dbReference>
<dbReference type="Bgee" id="ENSDARG00000055027">
    <property type="expression patterns" value="Expressed in blastula and 36 other cell types or tissues"/>
</dbReference>
<dbReference type="GO" id="GO:0005783">
    <property type="term" value="C:endoplasmic reticulum"/>
    <property type="evidence" value="ECO:0000318"/>
    <property type="project" value="GO_Central"/>
</dbReference>
<dbReference type="GO" id="GO:0005789">
    <property type="term" value="C:endoplasmic reticulum membrane"/>
    <property type="evidence" value="ECO:0007669"/>
    <property type="project" value="UniProtKB-SubCell"/>
</dbReference>
<dbReference type="GO" id="GO:0004169">
    <property type="term" value="F:dolichyl-phosphate-mannose-protein mannosyltransferase activity"/>
    <property type="evidence" value="ECO:0000316"/>
    <property type="project" value="ZFIN"/>
</dbReference>
<dbReference type="GO" id="GO:0045494">
    <property type="term" value="P:photoreceptor cell maintenance"/>
    <property type="evidence" value="ECO:0000315"/>
    <property type="project" value="ZFIN"/>
</dbReference>
<dbReference type="GO" id="GO:0035269">
    <property type="term" value="P:protein O-linked mannosylation"/>
    <property type="evidence" value="ECO:0000316"/>
    <property type="project" value="ZFIN"/>
</dbReference>
<dbReference type="CDD" id="cd23282">
    <property type="entry name" value="beta-trefoil_MIR_POMT2"/>
    <property type="match status" value="1"/>
</dbReference>
<dbReference type="FunFam" id="2.80.10.50:FF:000026">
    <property type="entry name" value="Blast:Protein O-mannosyl-transferase 2"/>
    <property type="match status" value="1"/>
</dbReference>
<dbReference type="Gene3D" id="2.80.10.50">
    <property type="match status" value="1"/>
</dbReference>
<dbReference type="InterPro" id="IPR027005">
    <property type="entry name" value="GlyclTrfase_39-like"/>
</dbReference>
<dbReference type="InterPro" id="IPR003342">
    <property type="entry name" value="Glyco_trans_39/83"/>
</dbReference>
<dbReference type="InterPro" id="IPR036300">
    <property type="entry name" value="MIR_dom_sf"/>
</dbReference>
<dbReference type="InterPro" id="IPR016093">
    <property type="entry name" value="MIR_motif"/>
</dbReference>
<dbReference type="InterPro" id="IPR032421">
    <property type="entry name" value="PMT_4TMC"/>
</dbReference>
<dbReference type="PANTHER" id="PTHR10050">
    <property type="entry name" value="DOLICHYL-PHOSPHATE-MANNOSE--PROTEIN MANNOSYLTRANSFERASE"/>
    <property type="match status" value="1"/>
</dbReference>
<dbReference type="PANTHER" id="PTHR10050:SF46">
    <property type="entry name" value="PROTEIN O-MANNOSYL-TRANSFERASE 2"/>
    <property type="match status" value="1"/>
</dbReference>
<dbReference type="Pfam" id="PF02815">
    <property type="entry name" value="MIR"/>
    <property type="match status" value="1"/>
</dbReference>
<dbReference type="Pfam" id="PF02366">
    <property type="entry name" value="PMT"/>
    <property type="match status" value="1"/>
</dbReference>
<dbReference type="Pfam" id="PF16192">
    <property type="entry name" value="PMT_4TMC"/>
    <property type="match status" value="1"/>
</dbReference>
<dbReference type="SMART" id="SM00472">
    <property type="entry name" value="MIR"/>
    <property type="match status" value="3"/>
</dbReference>
<dbReference type="SUPFAM" id="SSF82109">
    <property type="entry name" value="MIR domain"/>
    <property type="match status" value="1"/>
</dbReference>
<dbReference type="PROSITE" id="PS50919">
    <property type="entry name" value="MIR"/>
    <property type="match status" value="3"/>
</dbReference>
<proteinExistence type="evidence at protein level"/>
<gene>
    <name evidence="6" type="primary">pomt2</name>
</gene>